<protein>
    <recommendedName>
        <fullName evidence="1">Large ribosomal subunit protein bL34</fullName>
    </recommendedName>
    <alternativeName>
        <fullName evidence="3">50S ribosomal protein L34</fullName>
    </alternativeName>
</protein>
<reference key="1">
    <citation type="submission" date="2006-10" db="EMBL/GenBank/DDBJ databases">
        <title>Complete sequence of Syntrophobacter fumaroxidans MPOB.</title>
        <authorList>
            <consortium name="US DOE Joint Genome Institute"/>
            <person name="Copeland A."/>
            <person name="Lucas S."/>
            <person name="Lapidus A."/>
            <person name="Barry K."/>
            <person name="Detter J.C."/>
            <person name="Glavina del Rio T."/>
            <person name="Hammon N."/>
            <person name="Israni S."/>
            <person name="Pitluck S."/>
            <person name="Goltsman E.G."/>
            <person name="Martinez M."/>
            <person name="Schmutz J."/>
            <person name="Larimer F."/>
            <person name="Land M."/>
            <person name="Hauser L."/>
            <person name="Kyrpides N."/>
            <person name="Kim E."/>
            <person name="Boone D.R."/>
            <person name="Brockman F."/>
            <person name="Culley D."/>
            <person name="Ferry J."/>
            <person name="Gunsalus R."/>
            <person name="McInerney M.J."/>
            <person name="Morrison M."/>
            <person name="Plugge C."/>
            <person name="Rohlin L."/>
            <person name="Scholten J."/>
            <person name="Sieber J."/>
            <person name="Stams A.J.M."/>
            <person name="Worm P."/>
            <person name="Henstra A.M."/>
            <person name="Richardson P."/>
        </authorList>
    </citation>
    <scope>NUCLEOTIDE SEQUENCE [LARGE SCALE GENOMIC DNA]</scope>
    <source>
        <strain>DSM 10017 / MPOB</strain>
    </source>
</reference>
<name>RL34_SYNFM</name>
<gene>
    <name evidence="1" type="primary">rpmH</name>
    <name type="ordered locus">Sfum_2594</name>
</gene>
<organism>
    <name type="scientific">Syntrophobacter fumaroxidans (strain DSM 10017 / MPOB)</name>
    <dbReference type="NCBI Taxonomy" id="335543"/>
    <lineage>
        <taxon>Bacteria</taxon>
        <taxon>Pseudomonadati</taxon>
        <taxon>Thermodesulfobacteriota</taxon>
        <taxon>Syntrophobacteria</taxon>
        <taxon>Syntrophobacterales</taxon>
        <taxon>Syntrophobacteraceae</taxon>
        <taxon>Syntrophobacter</taxon>
    </lineage>
</organism>
<dbReference type="EMBL" id="CP000478">
    <property type="protein sequence ID" value="ABK18272.1"/>
    <property type="molecule type" value="Genomic_DNA"/>
</dbReference>
<dbReference type="RefSeq" id="WP_011699440.1">
    <property type="nucleotide sequence ID" value="NC_008554.1"/>
</dbReference>
<dbReference type="SMR" id="A0LLH0"/>
<dbReference type="FunCoup" id="A0LLH0">
    <property type="interactions" value="382"/>
</dbReference>
<dbReference type="STRING" id="335543.Sfum_2594"/>
<dbReference type="KEGG" id="sfu:Sfum_2594"/>
<dbReference type="eggNOG" id="COG0230">
    <property type="taxonomic scope" value="Bacteria"/>
</dbReference>
<dbReference type="HOGENOM" id="CLU_129938_2_0_7"/>
<dbReference type="InParanoid" id="A0LLH0"/>
<dbReference type="Proteomes" id="UP000001784">
    <property type="component" value="Chromosome"/>
</dbReference>
<dbReference type="GO" id="GO:1990904">
    <property type="term" value="C:ribonucleoprotein complex"/>
    <property type="evidence" value="ECO:0007669"/>
    <property type="project" value="UniProtKB-KW"/>
</dbReference>
<dbReference type="GO" id="GO:0005840">
    <property type="term" value="C:ribosome"/>
    <property type="evidence" value="ECO:0007669"/>
    <property type="project" value="UniProtKB-KW"/>
</dbReference>
<dbReference type="GO" id="GO:0003735">
    <property type="term" value="F:structural constituent of ribosome"/>
    <property type="evidence" value="ECO:0007669"/>
    <property type="project" value="InterPro"/>
</dbReference>
<dbReference type="GO" id="GO:0006412">
    <property type="term" value="P:translation"/>
    <property type="evidence" value="ECO:0007669"/>
    <property type="project" value="UniProtKB-UniRule"/>
</dbReference>
<dbReference type="FunFam" id="1.10.287.3980:FF:000001">
    <property type="entry name" value="Mitochondrial ribosomal protein L34"/>
    <property type="match status" value="1"/>
</dbReference>
<dbReference type="Gene3D" id="1.10.287.3980">
    <property type="match status" value="1"/>
</dbReference>
<dbReference type="HAMAP" id="MF_00391">
    <property type="entry name" value="Ribosomal_bL34"/>
    <property type="match status" value="1"/>
</dbReference>
<dbReference type="InterPro" id="IPR000271">
    <property type="entry name" value="Ribosomal_bL34"/>
</dbReference>
<dbReference type="NCBIfam" id="TIGR01030">
    <property type="entry name" value="rpmH_bact"/>
    <property type="match status" value="1"/>
</dbReference>
<dbReference type="PANTHER" id="PTHR14503:SF4">
    <property type="entry name" value="LARGE RIBOSOMAL SUBUNIT PROTEIN BL34M"/>
    <property type="match status" value="1"/>
</dbReference>
<dbReference type="PANTHER" id="PTHR14503">
    <property type="entry name" value="MITOCHONDRIAL RIBOSOMAL PROTEIN 34 FAMILY MEMBER"/>
    <property type="match status" value="1"/>
</dbReference>
<dbReference type="Pfam" id="PF00468">
    <property type="entry name" value="Ribosomal_L34"/>
    <property type="match status" value="1"/>
</dbReference>
<evidence type="ECO:0000255" key="1">
    <source>
        <dbReference type="HAMAP-Rule" id="MF_00391"/>
    </source>
</evidence>
<evidence type="ECO:0000256" key="2">
    <source>
        <dbReference type="SAM" id="MobiDB-lite"/>
    </source>
</evidence>
<evidence type="ECO:0000305" key="3"/>
<keyword id="KW-1185">Reference proteome</keyword>
<keyword id="KW-0687">Ribonucleoprotein</keyword>
<keyword id="KW-0689">Ribosomal protein</keyword>
<comment type="similarity">
    <text evidence="1">Belongs to the bacterial ribosomal protein bL34 family.</text>
</comment>
<proteinExistence type="inferred from homology"/>
<sequence length="45" mass="5426">MSKKTFQPSNVKRKRTHGFLERMSTRAGREIVRRRRARGRKRLSV</sequence>
<feature type="chain" id="PRO_1000060766" description="Large ribosomal subunit protein bL34">
    <location>
        <begin position="1"/>
        <end position="45"/>
    </location>
</feature>
<feature type="region of interest" description="Disordered" evidence="2">
    <location>
        <begin position="1"/>
        <end position="45"/>
    </location>
</feature>
<feature type="compositionally biased region" description="Polar residues" evidence="2">
    <location>
        <begin position="1"/>
        <end position="10"/>
    </location>
</feature>
<feature type="compositionally biased region" description="Basic and acidic residues" evidence="2">
    <location>
        <begin position="18"/>
        <end position="31"/>
    </location>
</feature>
<feature type="compositionally biased region" description="Basic residues" evidence="2">
    <location>
        <begin position="32"/>
        <end position="45"/>
    </location>
</feature>
<accession>A0LLH0</accession>